<comment type="function">
    <text evidence="1">This protein binds to the 23S rRNA, and is important in its secondary structure. It is located near the subunit interface in the base of the L7/L12 stalk, and near the tRNA binding site of the peptidyltransferase center.</text>
</comment>
<comment type="subunit">
    <text evidence="1">Part of the 50S ribosomal subunit.</text>
</comment>
<comment type="similarity">
    <text evidence="1">Belongs to the universal ribosomal protein uL6 family.</text>
</comment>
<proteinExistence type="inferred from homology"/>
<gene>
    <name evidence="1" type="primary">rplF</name>
    <name type="ordered locus">Mvan_1337</name>
</gene>
<accession>A1T4S1</accession>
<evidence type="ECO:0000255" key="1">
    <source>
        <dbReference type="HAMAP-Rule" id="MF_01365"/>
    </source>
</evidence>
<evidence type="ECO:0000305" key="2"/>
<protein>
    <recommendedName>
        <fullName evidence="1">Large ribosomal subunit protein uL6</fullName>
    </recommendedName>
    <alternativeName>
        <fullName evidence="2">50S ribosomal protein L6</fullName>
    </alternativeName>
</protein>
<keyword id="KW-0687">Ribonucleoprotein</keyword>
<keyword id="KW-0689">Ribosomal protein</keyword>
<keyword id="KW-0694">RNA-binding</keyword>
<keyword id="KW-0699">rRNA-binding</keyword>
<name>RL6_MYCVP</name>
<reference key="1">
    <citation type="submission" date="2006-12" db="EMBL/GenBank/DDBJ databases">
        <title>Complete sequence of Mycobacterium vanbaalenii PYR-1.</title>
        <authorList>
            <consortium name="US DOE Joint Genome Institute"/>
            <person name="Copeland A."/>
            <person name="Lucas S."/>
            <person name="Lapidus A."/>
            <person name="Barry K."/>
            <person name="Detter J.C."/>
            <person name="Glavina del Rio T."/>
            <person name="Hammon N."/>
            <person name="Israni S."/>
            <person name="Dalin E."/>
            <person name="Tice H."/>
            <person name="Pitluck S."/>
            <person name="Singan V."/>
            <person name="Schmutz J."/>
            <person name="Larimer F."/>
            <person name="Land M."/>
            <person name="Hauser L."/>
            <person name="Kyrpides N."/>
            <person name="Anderson I.J."/>
            <person name="Miller C."/>
            <person name="Richardson P."/>
        </authorList>
    </citation>
    <scope>NUCLEOTIDE SEQUENCE [LARGE SCALE GENOMIC DNA]</scope>
    <source>
        <strain>DSM 7251 / JCM 13017 / BCRC 16820 / KCTC 9966 / NRRL B-24157 / PYR-1</strain>
    </source>
</reference>
<sequence length="179" mass="19320">MSRIGKQPVTVPSGVDVTIDGQNVSVKGPKGTLTLDVAEPIAVTRDDDGAIVVTRPNDERRNRSLHGLSRTLIANLVTGVTEGYTTKMEIFGVGYRVVAKGSNLEFALGYSHPVLITAPEGVTFAVETPTKFSISGIDKQKVGQIAANIRRLRKSDPYKGKGIRYEGEQIRRKVGKTGK</sequence>
<feature type="chain" id="PRO_1000055271" description="Large ribosomal subunit protein uL6">
    <location>
        <begin position="1"/>
        <end position="179"/>
    </location>
</feature>
<organism>
    <name type="scientific">Mycolicibacterium vanbaalenii (strain DSM 7251 / JCM 13017 / BCRC 16820 / KCTC 9966 / NRRL B-24157 / PYR-1)</name>
    <name type="common">Mycobacterium vanbaalenii</name>
    <dbReference type="NCBI Taxonomy" id="350058"/>
    <lineage>
        <taxon>Bacteria</taxon>
        <taxon>Bacillati</taxon>
        <taxon>Actinomycetota</taxon>
        <taxon>Actinomycetes</taxon>
        <taxon>Mycobacteriales</taxon>
        <taxon>Mycobacteriaceae</taxon>
        <taxon>Mycolicibacterium</taxon>
    </lineage>
</organism>
<dbReference type="EMBL" id="CP000511">
    <property type="protein sequence ID" value="ABM12171.1"/>
    <property type="molecule type" value="Genomic_DNA"/>
</dbReference>
<dbReference type="RefSeq" id="WP_011778601.1">
    <property type="nucleotide sequence ID" value="NZ_JACKSD010000069.1"/>
</dbReference>
<dbReference type="SMR" id="A1T4S1"/>
<dbReference type="STRING" id="350058.Mvan_1337"/>
<dbReference type="KEGG" id="mva:Mvan_1337"/>
<dbReference type="eggNOG" id="COG0097">
    <property type="taxonomic scope" value="Bacteria"/>
</dbReference>
<dbReference type="HOGENOM" id="CLU_065464_1_2_11"/>
<dbReference type="Proteomes" id="UP000009159">
    <property type="component" value="Chromosome"/>
</dbReference>
<dbReference type="GO" id="GO:0022625">
    <property type="term" value="C:cytosolic large ribosomal subunit"/>
    <property type="evidence" value="ECO:0007669"/>
    <property type="project" value="TreeGrafter"/>
</dbReference>
<dbReference type="GO" id="GO:0019843">
    <property type="term" value="F:rRNA binding"/>
    <property type="evidence" value="ECO:0007669"/>
    <property type="project" value="UniProtKB-UniRule"/>
</dbReference>
<dbReference type="GO" id="GO:0003735">
    <property type="term" value="F:structural constituent of ribosome"/>
    <property type="evidence" value="ECO:0007669"/>
    <property type="project" value="InterPro"/>
</dbReference>
<dbReference type="GO" id="GO:0002181">
    <property type="term" value="P:cytoplasmic translation"/>
    <property type="evidence" value="ECO:0007669"/>
    <property type="project" value="TreeGrafter"/>
</dbReference>
<dbReference type="FunFam" id="3.90.930.12:FF:000001">
    <property type="entry name" value="50S ribosomal protein L6"/>
    <property type="match status" value="1"/>
</dbReference>
<dbReference type="FunFam" id="3.90.930.12:FF:000002">
    <property type="entry name" value="50S ribosomal protein L6"/>
    <property type="match status" value="1"/>
</dbReference>
<dbReference type="Gene3D" id="3.90.930.12">
    <property type="entry name" value="Ribosomal protein L6, alpha-beta domain"/>
    <property type="match status" value="2"/>
</dbReference>
<dbReference type="HAMAP" id="MF_01365_B">
    <property type="entry name" value="Ribosomal_uL6_B"/>
    <property type="match status" value="1"/>
</dbReference>
<dbReference type="InterPro" id="IPR000702">
    <property type="entry name" value="Ribosomal_uL6-like"/>
</dbReference>
<dbReference type="InterPro" id="IPR036789">
    <property type="entry name" value="Ribosomal_uL6-like_a/b-dom_sf"/>
</dbReference>
<dbReference type="InterPro" id="IPR020040">
    <property type="entry name" value="Ribosomal_uL6_a/b-dom"/>
</dbReference>
<dbReference type="InterPro" id="IPR019906">
    <property type="entry name" value="Ribosomal_uL6_bac-type"/>
</dbReference>
<dbReference type="InterPro" id="IPR002358">
    <property type="entry name" value="Ribosomal_uL6_CS"/>
</dbReference>
<dbReference type="NCBIfam" id="TIGR03654">
    <property type="entry name" value="L6_bact"/>
    <property type="match status" value="1"/>
</dbReference>
<dbReference type="PANTHER" id="PTHR11655">
    <property type="entry name" value="60S/50S RIBOSOMAL PROTEIN L6/L9"/>
    <property type="match status" value="1"/>
</dbReference>
<dbReference type="PANTHER" id="PTHR11655:SF14">
    <property type="entry name" value="LARGE RIBOSOMAL SUBUNIT PROTEIN UL6M"/>
    <property type="match status" value="1"/>
</dbReference>
<dbReference type="Pfam" id="PF00347">
    <property type="entry name" value="Ribosomal_L6"/>
    <property type="match status" value="2"/>
</dbReference>
<dbReference type="PIRSF" id="PIRSF002162">
    <property type="entry name" value="Ribosomal_L6"/>
    <property type="match status" value="1"/>
</dbReference>
<dbReference type="PRINTS" id="PR00059">
    <property type="entry name" value="RIBOSOMALL6"/>
</dbReference>
<dbReference type="SUPFAM" id="SSF56053">
    <property type="entry name" value="Ribosomal protein L6"/>
    <property type="match status" value="2"/>
</dbReference>
<dbReference type="PROSITE" id="PS00525">
    <property type="entry name" value="RIBOSOMAL_L6_1"/>
    <property type="match status" value="1"/>
</dbReference>